<proteinExistence type="evidence at transcript level"/>
<reference key="1">
    <citation type="journal article" date="2013" name="Nature">
        <title>The zebrafish reference genome sequence and its relationship to the human genome.</title>
        <authorList>
            <person name="Howe K."/>
            <person name="Clark M.D."/>
            <person name="Torroja C.F."/>
            <person name="Torrance J."/>
            <person name="Berthelot C."/>
            <person name="Muffato M."/>
            <person name="Collins J.E."/>
            <person name="Humphray S."/>
            <person name="McLaren K."/>
            <person name="Matthews L."/>
            <person name="McLaren S."/>
            <person name="Sealy I."/>
            <person name="Caccamo M."/>
            <person name="Churcher C."/>
            <person name="Scott C."/>
            <person name="Barrett J.C."/>
            <person name="Koch R."/>
            <person name="Rauch G.J."/>
            <person name="White S."/>
            <person name="Chow W."/>
            <person name="Kilian B."/>
            <person name="Quintais L.T."/>
            <person name="Guerra-Assuncao J.A."/>
            <person name="Zhou Y."/>
            <person name="Gu Y."/>
            <person name="Yen J."/>
            <person name="Vogel J.H."/>
            <person name="Eyre T."/>
            <person name="Redmond S."/>
            <person name="Banerjee R."/>
            <person name="Chi J."/>
            <person name="Fu B."/>
            <person name="Langley E."/>
            <person name="Maguire S.F."/>
            <person name="Laird G.K."/>
            <person name="Lloyd D."/>
            <person name="Kenyon E."/>
            <person name="Donaldson S."/>
            <person name="Sehra H."/>
            <person name="Almeida-King J."/>
            <person name="Loveland J."/>
            <person name="Trevanion S."/>
            <person name="Jones M."/>
            <person name="Quail M."/>
            <person name="Willey D."/>
            <person name="Hunt A."/>
            <person name="Burton J."/>
            <person name="Sims S."/>
            <person name="McLay K."/>
            <person name="Plumb B."/>
            <person name="Davis J."/>
            <person name="Clee C."/>
            <person name="Oliver K."/>
            <person name="Clark R."/>
            <person name="Riddle C."/>
            <person name="Elliot D."/>
            <person name="Threadgold G."/>
            <person name="Harden G."/>
            <person name="Ware D."/>
            <person name="Begum S."/>
            <person name="Mortimore B."/>
            <person name="Kerry G."/>
            <person name="Heath P."/>
            <person name="Phillimore B."/>
            <person name="Tracey A."/>
            <person name="Corby N."/>
            <person name="Dunn M."/>
            <person name="Johnson C."/>
            <person name="Wood J."/>
            <person name="Clark S."/>
            <person name="Pelan S."/>
            <person name="Griffiths G."/>
            <person name="Smith M."/>
            <person name="Glithero R."/>
            <person name="Howden P."/>
            <person name="Barker N."/>
            <person name="Lloyd C."/>
            <person name="Stevens C."/>
            <person name="Harley J."/>
            <person name="Holt K."/>
            <person name="Panagiotidis G."/>
            <person name="Lovell J."/>
            <person name="Beasley H."/>
            <person name="Henderson C."/>
            <person name="Gordon D."/>
            <person name="Auger K."/>
            <person name="Wright D."/>
            <person name="Collins J."/>
            <person name="Raisen C."/>
            <person name="Dyer L."/>
            <person name="Leung K."/>
            <person name="Robertson L."/>
            <person name="Ambridge K."/>
            <person name="Leongamornlert D."/>
            <person name="McGuire S."/>
            <person name="Gilderthorp R."/>
            <person name="Griffiths C."/>
            <person name="Manthravadi D."/>
            <person name="Nichol S."/>
            <person name="Barker G."/>
            <person name="Whitehead S."/>
            <person name="Kay M."/>
            <person name="Brown J."/>
            <person name="Murnane C."/>
            <person name="Gray E."/>
            <person name="Humphries M."/>
            <person name="Sycamore N."/>
            <person name="Barker D."/>
            <person name="Saunders D."/>
            <person name="Wallis J."/>
            <person name="Babbage A."/>
            <person name="Hammond S."/>
            <person name="Mashreghi-Mohammadi M."/>
            <person name="Barr L."/>
            <person name="Martin S."/>
            <person name="Wray P."/>
            <person name="Ellington A."/>
            <person name="Matthews N."/>
            <person name="Ellwood M."/>
            <person name="Woodmansey R."/>
            <person name="Clark G."/>
            <person name="Cooper J."/>
            <person name="Tromans A."/>
            <person name="Grafham D."/>
            <person name="Skuce C."/>
            <person name="Pandian R."/>
            <person name="Andrews R."/>
            <person name="Harrison E."/>
            <person name="Kimberley A."/>
            <person name="Garnett J."/>
            <person name="Fosker N."/>
            <person name="Hall R."/>
            <person name="Garner P."/>
            <person name="Kelly D."/>
            <person name="Bird C."/>
            <person name="Palmer S."/>
            <person name="Gehring I."/>
            <person name="Berger A."/>
            <person name="Dooley C.M."/>
            <person name="Ersan-Urun Z."/>
            <person name="Eser C."/>
            <person name="Geiger H."/>
            <person name="Geisler M."/>
            <person name="Karotki L."/>
            <person name="Kirn A."/>
            <person name="Konantz J."/>
            <person name="Konantz M."/>
            <person name="Oberlander M."/>
            <person name="Rudolph-Geiger S."/>
            <person name="Teucke M."/>
            <person name="Lanz C."/>
            <person name="Raddatz G."/>
            <person name="Osoegawa K."/>
            <person name="Zhu B."/>
            <person name="Rapp A."/>
            <person name="Widaa S."/>
            <person name="Langford C."/>
            <person name="Yang F."/>
            <person name="Schuster S.C."/>
            <person name="Carter N.P."/>
            <person name="Harrow J."/>
            <person name="Ning Z."/>
            <person name="Herrero J."/>
            <person name="Searle S.M."/>
            <person name="Enright A."/>
            <person name="Geisler R."/>
            <person name="Plasterk R.H."/>
            <person name="Lee C."/>
            <person name="Westerfield M."/>
            <person name="de Jong P.J."/>
            <person name="Zon L.I."/>
            <person name="Postlethwait J.H."/>
            <person name="Nusslein-Volhard C."/>
            <person name="Hubbard T.J."/>
            <person name="Roest Crollius H."/>
            <person name="Rogers J."/>
            <person name="Stemple D.L."/>
        </authorList>
    </citation>
    <scope>NUCLEOTIDE SEQUENCE [LARGE SCALE GENOMIC DNA]</scope>
    <source>
        <strain>Tuebingen</strain>
    </source>
</reference>
<reference key="2">
    <citation type="submission" date="2007-11" db="EMBL/GenBank/DDBJ databases">
        <authorList>
            <consortium name="NIH - Zebrafish Gene Collection (ZGC) project"/>
        </authorList>
    </citation>
    <scope>NUCLEOTIDE SEQUENCE [LARGE SCALE MRNA] OF 83-349</scope>
</reference>
<feature type="chain" id="PRO_0000387948" description="DENN domain-containing protein 10">
    <location>
        <begin position="1"/>
        <end position="349"/>
    </location>
</feature>
<feature type="domain" description="uDENN" evidence="2">
    <location>
        <begin position="1"/>
        <end position="135"/>
    </location>
</feature>
<feature type="domain" description="cDENN" evidence="2">
    <location>
        <begin position="160"/>
        <end position="294"/>
    </location>
</feature>
<feature type="domain" description="dDENN" evidence="2">
    <location>
        <begin position="296"/>
        <end position="349"/>
    </location>
</feature>
<gene>
    <name type="primary">dennd10</name>
    <name type="synonym">fam45</name>
    <name type="synonym">fam45a</name>
    <name type="ORF">si:ch211-117n7.2</name>
</gene>
<organism>
    <name type="scientific">Danio rerio</name>
    <name type="common">Zebrafish</name>
    <name type="synonym">Brachydanio rerio</name>
    <dbReference type="NCBI Taxonomy" id="7955"/>
    <lineage>
        <taxon>Eukaryota</taxon>
        <taxon>Metazoa</taxon>
        <taxon>Chordata</taxon>
        <taxon>Craniata</taxon>
        <taxon>Vertebrata</taxon>
        <taxon>Euteleostomi</taxon>
        <taxon>Actinopterygii</taxon>
        <taxon>Neopterygii</taxon>
        <taxon>Teleostei</taxon>
        <taxon>Ostariophysi</taxon>
        <taxon>Cypriniformes</taxon>
        <taxon>Danionidae</taxon>
        <taxon>Danioninae</taxon>
        <taxon>Danio</taxon>
    </lineage>
</organism>
<accession>A8E7G4</accession>
<accession>A8WFY8</accession>
<evidence type="ECO:0000250" key="1">
    <source>
        <dbReference type="UniProtKB" id="Q8TCE6"/>
    </source>
</evidence>
<evidence type="ECO:0000255" key="2">
    <source>
        <dbReference type="PROSITE-ProRule" id="PRU00304"/>
    </source>
</evidence>
<evidence type="ECO:0000305" key="3"/>
<comment type="function">
    <text evidence="1">Guanine nucleotide exchange factor (GEF) which may be involved in the regulation of late endocytic pathway homeostasis, including endosomal positioning, maturation and secretion.</text>
</comment>
<comment type="subcellular location">
    <subcellularLocation>
        <location evidence="1">Late endosome</location>
    </subcellularLocation>
</comment>
<comment type="similarity">
    <text evidence="3">Belongs to the DENND10 family.</text>
</comment>
<protein>
    <recommendedName>
        <fullName evidence="3">DENN domain-containing protein 10</fullName>
    </recommendedName>
    <alternativeName>
        <fullName>Protein FAM45</fullName>
    </alternativeName>
    <alternativeName>
        <fullName>Protein FAM45A</fullName>
    </alternativeName>
</protein>
<keyword id="KW-0967">Endosome</keyword>
<keyword id="KW-0344">Guanine-nucleotide releasing factor</keyword>
<keyword id="KW-1185">Reference proteome</keyword>
<sequence>MATPELMLSLGLIEKDVNADTLWVWCYPSIDADLREVMLRKCCLTLDNQVLHTFVFGQFCRTWYYITTVEVQEPTVLKKVTHFSIVVTAKDFNPEKYAAFSRVLCRTYMKHGSPVKMMEGYIAVLTKGICQSDENGSFLIKDYDVRKALLAGSLKDVVSQFGMETIILYTALMLKKRVVVYHPRIEALLEFTRALPCLVWHRKDWSILHPFVHLENDELENLKVCTGYVAGFVDPEVKDRSDLFDVFVNLPDSEITVSQNAKEAMSMGKLHKEIGNFIVQAAEDADRSDAQVIKDISVKTKEILSNLMSLADHADNSKLTLECLKQGHYPPATENFLFHLAAAEQLLKI</sequence>
<name>DEN10_DANRE</name>
<dbReference type="EMBL" id="BX248127">
    <property type="protein sequence ID" value="CAP09408.1"/>
    <property type="molecule type" value="Genomic_DNA"/>
</dbReference>
<dbReference type="EMBL" id="BC154508">
    <property type="protein sequence ID" value="AAI54509.1"/>
    <property type="molecule type" value="mRNA"/>
</dbReference>
<dbReference type="RefSeq" id="NP_001161133.1">
    <property type="nucleotide sequence ID" value="NM_001167661.1"/>
</dbReference>
<dbReference type="RefSeq" id="XP_684048.3">
    <property type="nucleotide sequence ID" value="XM_678956.8"/>
</dbReference>
<dbReference type="SMR" id="A8E7G4"/>
<dbReference type="FunCoup" id="A8E7G4">
    <property type="interactions" value="415"/>
</dbReference>
<dbReference type="STRING" id="7955.ENSDARP00000086028"/>
<dbReference type="PaxDb" id="7955-ENSDARP00000086028"/>
<dbReference type="Ensembl" id="ENSDART00000091595">
    <property type="protein sequence ID" value="ENSDARP00000086028"/>
    <property type="gene ID" value="ENSDARG00000062965"/>
</dbReference>
<dbReference type="GeneID" id="556203"/>
<dbReference type="KEGG" id="dre:556203"/>
<dbReference type="AGR" id="ZFIN:ZDB-GENE-030131-3548"/>
<dbReference type="CTD" id="404636"/>
<dbReference type="ZFIN" id="ZDB-GENE-030131-3548">
    <property type="gene designation" value="dennd10"/>
</dbReference>
<dbReference type="eggNOG" id="ENOG502QVHR">
    <property type="taxonomic scope" value="Eukaryota"/>
</dbReference>
<dbReference type="InParanoid" id="A8E7G4"/>
<dbReference type="OMA" id="HKDIAMF"/>
<dbReference type="OrthoDB" id="66409at2759"/>
<dbReference type="PhylomeDB" id="A8E7G4"/>
<dbReference type="TreeFam" id="TF332501"/>
<dbReference type="PRO" id="PR:A8E7G4"/>
<dbReference type="Proteomes" id="UP000000437">
    <property type="component" value="Alternate scaffold 13"/>
</dbReference>
<dbReference type="Proteomes" id="UP000000437">
    <property type="component" value="Chromosome 13"/>
</dbReference>
<dbReference type="Bgee" id="ENSDARG00000062965">
    <property type="expression patterns" value="Expressed in intestine and 19 other cell types or tissues"/>
</dbReference>
<dbReference type="GO" id="GO:0005770">
    <property type="term" value="C:late endosome"/>
    <property type="evidence" value="ECO:0000250"/>
    <property type="project" value="UniProtKB"/>
</dbReference>
<dbReference type="GO" id="GO:0005085">
    <property type="term" value="F:guanyl-nucleotide exchange factor activity"/>
    <property type="evidence" value="ECO:0000250"/>
    <property type="project" value="UniProtKB"/>
</dbReference>
<dbReference type="GO" id="GO:0031267">
    <property type="term" value="F:small GTPase binding"/>
    <property type="evidence" value="ECO:0000318"/>
    <property type="project" value="GO_Central"/>
</dbReference>
<dbReference type="GO" id="GO:0032509">
    <property type="term" value="P:endosome transport via multivesicular body sorting pathway"/>
    <property type="evidence" value="ECO:0000250"/>
    <property type="project" value="UniProtKB"/>
</dbReference>
<dbReference type="GO" id="GO:0015031">
    <property type="term" value="P:protein transport"/>
    <property type="evidence" value="ECO:0000250"/>
    <property type="project" value="UniProtKB"/>
</dbReference>
<dbReference type="GO" id="GO:2000641">
    <property type="term" value="P:regulation of early endosome to late endosome transport"/>
    <property type="evidence" value="ECO:0000250"/>
    <property type="project" value="UniProtKB"/>
</dbReference>
<dbReference type="InterPro" id="IPR042431">
    <property type="entry name" value="FAM45"/>
</dbReference>
<dbReference type="InterPro" id="IPR037516">
    <property type="entry name" value="Tripartite_DENN"/>
</dbReference>
<dbReference type="PANTHER" id="PTHR28544:SF1">
    <property type="entry name" value="DENN DOMAIN-CONTAINING PROTEIN 10-RELATED"/>
    <property type="match status" value="1"/>
</dbReference>
<dbReference type="PANTHER" id="PTHR28544">
    <property type="entry name" value="PROTEIN FAM45A-RELATED"/>
    <property type="match status" value="1"/>
</dbReference>
<dbReference type="Pfam" id="PF08616">
    <property type="entry name" value="SPA"/>
    <property type="match status" value="1"/>
</dbReference>
<dbReference type="PROSITE" id="PS50211">
    <property type="entry name" value="DENN"/>
    <property type="match status" value="1"/>
</dbReference>